<name>RPOA_RHORT</name>
<dbReference type="EC" id="2.7.7.6" evidence="1"/>
<dbReference type="EMBL" id="CP000230">
    <property type="protein sequence ID" value="ABC23461.1"/>
    <property type="molecule type" value="Genomic_DNA"/>
</dbReference>
<dbReference type="RefSeq" id="YP_427748.1">
    <property type="nucleotide sequence ID" value="NC_007643.1"/>
</dbReference>
<dbReference type="SMR" id="Q2RQY4"/>
<dbReference type="STRING" id="269796.Rru_A2664"/>
<dbReference type="EnsemblBacteria" id="ABC23461">
    <property type="protein sequence ID" value="ABC23461"/>
    <property type="gene ID" value="Rru_A2664"/>
</dbReference>
<dbReference type="KEGG" id="rru:Rru_A2664"/>
<dbReference type="PATRIC" id="fig|269796.9.peg.2771"/>
<dbReference type="eggNOG" id="COG0202">
    <property type="taxonomic scope" value="Bacteria"/>
</dbReference>
<dbReference type="HOGENOM" id="CLU_053084_0_0_5"/>
<dbReference type="PhylomeDB" id="Q2RQY4"/>
<dbReference type="Proteomes" id="UP000001929">
    <property type="component" value="Chromosome"/>
</dbReference>
<dbReference type="GO" id="GO:0005737">
    <property type="term" value="C:cytoplasm"/>
    <property type="evidence" value="ECO:0007669"/>
    <property type="project" value="UniProtKB-ARBA"/>
</dbReference>
<dbReference type="GO" id="GO:0000428">
    <property type="term" value="C:DNA-directed RNA polymerase complex"/>
    <property type="evidence" value="ECO:0007669"/>
    <property type="project" value="UniProtKB-KW"/>
</dbReference>
<dbReference type="GO" id="GO:0003677">
    <property type="term" value="F:DNA binding"/>
    <property type="evidence" value="ECO:0007669"/>
    <property type="project" value="UniProtKB-UniRule"/>
</dbReference>
<dbReference type="GO" id="GO:0003899">
    <property type="term" value="F:DNA-directed RNA polymerase activity"/>
    <property type="evidence" value="ECO:0007669"/>
    <property type="project" value="UniProtKB-UniRule"/>
</dbReference>
<dbReference type="GO" id="GO:0046983">
    <property type="term" value="F:protein dimerization activity"/>
    <property type="evidence" value="ECO:0007669"/>
    <property type="project" value="InterPro"/>
</dbReference>
<dbReference type="GO" id="GO:0006351">
    <property type="term" value="P:DNA-templated transcription"/>
    <property type="evidence" value="ECO:0007669"/>
    <property type="project" value="UniProtKB-UniRule"/>
</dbReference>
<dbReference type="CDD" id="cd06928">
    <property type="entry name" value="RNAP_alpha_NTD"/>
    <property type="match status" value="1"/>
</dbReference>
<dbReference type="FunFam" id="1.10.150.20:FF:000001">
    <property type="entry name" value="DNA-directed RNA polymerase subunit alpha"/>
    <property type="match status" value="1"/>
</dbReference>
<dbReference type="FunFam" id="2.170.120.12:FF:000001">
    <property type="entry name" value="DNA-directed RNA polymerase subunit alpha"/>
    <property type="match status" value="1"/>
</dbReference>
<dbReference type="Gene3D" id="1.10.150.20">
    <property type="entry name" value="5' to 3' exonuclease, C-terminal subdomain"/>
    <property type="match status" value="1"/>
</dbReference>
<dbReference type="Gene3D" id="2.170.120.12">
    <property type="entry name" value="DNA-directed RNA polymerase, insert domain"/>
    <property type="match status" value="1"/>
</dbReference>
<dbReference type="Gene3D" id="3.30.1360.10">
    <property type="entry name" value="RNA polymerase, RBP11-like subunit"/>
    <property type="match status" value="1"/>
</dbReference>
<dbReference type="HAMAP" id="MF_00059">
    <property type="entry name" value="RNApol_bact_RpoA"/>
    <property type="match status" value="1"/>
</dbReference>
<dbReference type="InterPro" id="IPR011262">
    <property type="entry name" value="DNA-dir_RNA_pol_insert"/>
</dbReference>
<dbReference type="InterPro" id="IPR011263">
    <property type="entry name" value="DNA-dir_RNA_pol_RpoA/D/Rpb3"/>
</dbReference>
<dbReference type="InterPro" id="IPR011773">
    <property type="entry name" value="DNA-dir_RpoA"/>
</dbReference>
<dbReference type="InterPro" id="IPR036603">
    <property type="entry name" value="RBP11-like"/>
</dbReference>
<dbReference type="InterPro" id="IPR011260">
    <property type="entry name" value="RNAP_asu_C"/>
</dbReference>
<dbReference type="InterPro" id="IPR036643">
    <property type="entry name" value="RNApol_insert_sf"/>
</dbReference>
<dbReference type="NCBIfam" id="NF003513">
    <property type="entry name" value="PRK05182.1-2"/>
    <property type="match status" value="1"/>
</dbReference>
<dbReference type="NCBIfam" id="NF003519">
    <property type="entry name" value="PRK05182.2-5"/>
    <property type="match status" value="1"/>
</dbReference>
<dbReference type="NCBIfam" id="TIGR02027">
    <property type="entry name" value="rpoA"/>
    <property type="match status" value="1"/>
</dbReference>
<dbReference type="Pfam" id="PF01000">
    <property type="entry name" value="RNA_pol_A_bac"/>
    <property type="match status" value="1"/>
</dbReference>
<dbReference type="Pfam" id="PF03118">
    <property type="entry name" value="RNA_pol_A_CTD"/>
    <property type="match status" value="1"/>
</dbReference>
<dbReference type="Pfam" id="PF01193">
    <property type="entry name" value="RNA_pol_L"/>
    <property type="match status" value="1"/>
</dbReference>
<dbReference type="SMART" id="SM00662">
    <property type="entry name" value="RPOLD"/>
    <property type="match status" value="1"/>
</dbReference>
<dbReference type="SUPFAM" id="SSF47789">
    <property type="entry name" value="C-terminal domain of RNA polymerase alpha subunit"/>
    <property type="match status" value="1"/>
</dbReference>
<dbReference type="SUPFAM" id="SSF56553">
    <property type="entry name" value="Insert subdomain of RNA polymerase alpha subunit"/>
    <property type="match status" value="1"/>
</dbReference>
<dbReference type="SUPFAM" id="SSF55257">
    <property type="entry name" value="RBP11-like subunits of RNA polymerase"/>
    <property type="match status" value="1"/>
</dbReference>
<feature type="chain" id="PRO_0000264537" description="DNA-directed RNA polymerase subunit alpha">
    <location>
        <begin position="1"/>
        <end position="340"/>
    </location>
</feature>
<feature type="region of interest" description="Alpha N-terminal domain (alpha-NTD)" evidence="1">
    <location>
        <begin position="1"/>
        <end position="236"/>
    </location>
</feature>
<feature type="region of interest" description="Alpha C-terminal domain (alpha-CTD)" evidence="1">
    <location>
        <begin position="252"/>
        <end position="340"/>
    </location>
</feature>
<gene>
    <name evidence="1" type="primary">rpoA</name>
    <name type="ordered locus">Rru_A2664</name>
</gene>
<keyword id="KW-0240">DNA-directed RNA polymerase</keyword>
<keyword id="KW-0548">Nucleotidyltransferase</keyword>
<keyword id="KW-1185">Reference proteome</keyword>
<keyword id="KW-0804">Transcription</keyword>
<keyword id="KW-0808">Transferase</keyword>
<accession>Q2RQY4</accession>
<protein>
    <recommendedName>
        <fullName evidence="1">DNA-directed RNA polymerase subunit alpha</fullName>
        <shortName evidence="1">RNAP subunit alpha</shortName>
        <ecNumber evidence="1">2.7.7.6</ecNumber>
    </recommendedName>
    <alternativeName>
        <fullName evidence="1">RNA polymerase subunit alpha</fullName>
    </alternativeName>
    <alternativeName>
        <fullName evidence="1">Transcriptase subunit alpha</fullName>
    </alternativeName>
</protein>
<organism>
    <name type="scientific">Rhodospirillum rubrum (strain ATCC 11170 / ATH 1.1.1 / DSM 467 / LMG 4362 / NCIMB 8255 / S1)</name>
    <dbReference type="NCBI Taxonomy" id="269796"/>
    <lineage>
        <taxon>Bacteria</taxon>
        <taxon>Pseudomonadati</taxon>
        <taxon>Pseudomonadota</taxon>
        <taxon>Alphaproteobacteria</taxon>
        <taxon>Rhodospirillales</taxon>
        <taxon>Rhodospirillaceae</taxon>
        <taxon>Rhodospirillum</taxon>
    </lineage>
</organism>
<evidence type="ECO:0000255" key="1">
    <source>
        <dbReference type="HAMAP-Rule" id="MF_00059"/>
    </source>
</evidence>
<sequence length="340" mass="37453">MSVIQKNWQELIKPNKLMIELVGGSKKVATVVAEPLERGFGLTLGNALRRVLLSSLQGAAVTAIQIEGVLHEFSSIPGVREDVTDVILNIKGLALLMHSEGPRRMTLKASGPGEVTAAQIEMGSDIEIMNPDLVICHLDEGATLSMEFTVGMGKGYVPSTQNRPEDAPIGYIPIDSIFSPVTKVSYRVENSRVGQVTDYDKLSMVVETDGSVGPEDAVALAARILQDQLQLFINFEEPQAVSEEKKDDELPFNKNLLRKVDELELSVRSANCLKNDNIIYIGDLVQKTEAEMLRTPNFGRKSLNEIKEVLAQMGLHLGMEISNWPPENIEDLAKKLEEPY</sequence>
<reference key="1">
    <citation type="journal article" date="2011" name="Stand. Genomic Sci.">
        <title>Complete genome sequence of Rhodospirillum rubrum type strain (S1).</title>
        <authorList>
            <person name="Munk A.C."/>
            <person name="Copeland A."/>
            <person name="Lucas S."/>
            <person name="Lapidus A."/>
            <person name="Del Rio T.G."/>
            <person name="Barry K."/>
            <person name="Detter J.C."/>
            <person name="Hammon N."/>
            <person name="Israni S."/>
            <person name="Pitluck S."/>
            <person name="Brettin T."/>
            <person name="Bruce D."/>
            <person name="Han C."/>
            <person name="Tapia R."/>
            <person name="Gilna P."/>
            <person name="Schmutz J."/>
            <person name="Larimer F."/>
            <person name="Land M."/>
            <person name="Kyrpides N.C."/>
            <person name="Mavromatis K."/>
            <person name="Richardson P."/>
            <person name="Rohde M."/>
            <person name="Goeker M."/>
            <person name="Klenk H.P."/>
            <person name="Zhang Y."/>
            <person name="Roberts G.P."/>
            <person name="Reslewic S."/>
            <person name="Schwartz D.C."/>
        </authorList>
    </citation>
    <scope>NUCLEOTIDE SEQUENCE [LARGE SCALE GENOMIC DNA]</scope>
    <source>
        <strain>ATCC 11170 / ATH 1.1.1 / DSM 467 / LMG 4362 / NCIMB 8255 / S1</strain>
    </source>
</reference>
<proteinExistence type="inferred from homology"/>
<comment type="function">
    <text evidence="1">DNA-dependent RNA polymerase catalyzes the transcription of DNA into RNA using the four ribonucleoside triphosphates as substrates.</text>
</comment>
<comment type="catalytic activity">
    <reaction evidence="1">
        <text>RNA(n) + a ribonucleoside 5'-triphosphate = RNA(n+1) + diphosphate</text>
        <dbReference type="Rhea" id="RHEA:21248"/>
        <dbReference type="Rhea" id="RHEA-COMP:14527"/>
        <dbReference type="Rhea" id="RHEA-COMP:17342"/>
        <dbReference type="ChEBI" id="CHEBI:33019"/>
        <dbReference type="ChEBI" id="CHEBI:61557"/>
        <dbReference type="ChEBI" id="CHEBI:140395"/>
        <dbReference type="EC" id="2.7.7.6"/>
    </reaction>
</comment>
<comment type="subunit">
    <text evidence="1">Homodimer. The RNAP catalytic core consists of 2 alpha, 1 beta, 1 beta' and 1 omega subunit. When a sigma factor is associated with the core the holoenzyme is formed, which can initiate transcription.</text>
</comment>
<comment type="domain">
    <text evidence="1">The N-terminal domain is essential for RNAP assembly and basal transcription, whereas the C-terminal domain is involved in interaction with transcriptional regulators and with upstream promoter elements.</text>
</comment>
<comment type="similarity">
    <text evidence="1">Belongs to the RNA polymerase alpha chain family.</text>
</comment>